<gene>
    <name type="primary">HSP21</name>
    <name type="ordered locus">CAALFM_C204010CA</name>
    <name type="ORF">CaO19.822</name>
    <name type="ORF">CaO19.8442</name>
</gene>
<dbReference type="EMBL" id="CP017624">
    <property type="protein sequence ID" value="AOW27428.1"/>
    <property type="molecule type" value="Genomic_DNA"/>
</dbReference>
<dbReference type="RefSeq" id="XP_720946.1">
    <property type="nucleotide sequence ID" value="XM_715853.2"/>
</dbReference>
<dbReference type="SMR" id="Q5AHH4"/>
<dbReference type="BioGRID" id="1220397">
    <property type="interactions" value="2"/>
</dbReference>
<dbReference type="STRING" id="237561.Q5AHH4"/>
<dbReference type="EnsemblFungi" id="C2_04010C_A-T">
    <property type="protein sequence ID" value="C2_04010C_A-T-p1"/>
    <property type="gene ID" value="C2_04010C_A"/>
</dbReference>
<dbReference type="GeneID" id="3637364"/>
<dbReference type="KEGG" id="cal:CAALFM_C204010CA"/>
<dbReference type="CGD" id="CAL0000174399">
    <property type="gene designation" value="HSP21"/>
</dbReference>
<dbReference type="VEuPathDB" id="FungiDB:C2_04010C_A"/>
<dbReference type="eggNOG" id="ENOG502RQBX">
    <property type="taxonomic scope" value="Eukaryota"/>
</dbReference>
<dbReference type="HOGENOM" id="CLU_114640_0_0_1"/>
<dbReference type="InParanoid" id="Q5AHH4"/>
<dbReference type="OMA" id="HSARTYH"/>
<dbReference type="OrthoDB" id="1431247at2759"/>
<dbReference type="PRO" id="PR:Q5AHH4"/>
<dbReference type="Proteomes" id="UP000000559">
    <property type="component" value="Chromosome 2"/>
</dbReference>
<dbReference type="GO" id="GO:0009986">
    <property type="term" value="C:cell surface"/>
    <property type="evidence" value="ECO:0000314"/>
    <property type="project" value="CGD"/>
</dbReference>
<dbReference type="GO" id="GO:0070370">
    <property type="term" value="P:cellular heat acclimation"/>
    <property type="evidence" value="ECO:0000315"/>
    <property type="project" value="CGD"/>
</dbReference>
<dbReference type="GO" id="GO:0034599">
    <property type="term" value="P:cellular response to oxidative stress"/>
    <property type="evidence" value="ECO:0000315"/>
    <property type="project" value="CGD"/>
</dbReference>
<dbReference type="GO" id="GO:0044182">
    <property type="term" value="P:filamentous growth of a population of unicellular organisms"/>
    <property type="evidence" value="ECO:0000315"/>
    <property type="project" value="CGD"/>
</dbReference>
<dbReference type="CDD" id="cd00298">
    <property type="entry name" value="ACD_sHsps_p23-like"/>
    <property type="match status" value="1"/>
</dbReference>
<dbReference type="FunFam" id="2.60.40.790:FF:000123">
    <property type="match status" value="1"/>
</dbReference>
<dbReference type="Gene3D" id="2.60.40.790">
    <property type="match status" value="1"/>
</dbReference>
<dbReference type="InterPro" id="IPR002068">
    <property type="entry name" value="A-crystallin/Hsp20_dom"/>
</dbReference>
<dbReference type="InterPro" id="IPR008978">
    <property type="entry name" value="HSP20-like_chaperone"/>
</dbReference>
<dbReference type="Pfam" id="PF00011">
    <property type="entry name" value="HSP20"/>
    <property type="match status" value="1"/>
</dbReference>
<dbReference type="SUPFAM" id="SSF49764">
    <property type="entry name" value="HSP20-like chaperones"/>
    <property type="match status" value="1"/>
</dbReference>
<dbReference type="PROSITE" id="PS01031">
    <property type="entry name" value="SHSP"/>
    <property type="match status" value="1"/>
</dbReference>
<sequence length="189" mass="21495">MSWFGFFDPDFDDFFGRPRKYATEVPPNFNPRKIAQGDNGKGQQVSRYGAGAGHPHRALARRDDFFDDFWKNFSSGKYFVGFDDNVKTTEESDKYVVSYDQENLSPDEVNVDFDKQENELIITVTQETEKDGTKKSSTFHSNLKFEKPVNFDDISAEIGEQGVQVTLPKVHADHEKIVNIPISKAAAKK</sequence>
<feature type="chain" id="PRO_0000424598" description="Small heat shock protein 21">
    <location>
        <begin position="1"/>
        <end position="189"/>
    </location>
</feature>
<feature type="domain" description="sHSP" evidence="1">
    <location>
        <begin position="77"/>
        <end position="183"/>
    </location>
</feature>
<feature type="region of interest" description="Disordered" evidence="2">
    <location>
        <begin position="26"/>
        <end position="53"/>
    </location>
</feature>
<accession>Q5AHH4</accession>
<accession>A0A1D8PH06</accession>
<reference key="1">
    <citation type="journal article" date="2004" name="Proc. Natl. Acad. Sci. U.S.A.">
        <title>The diploid genome sequence of Candida albicans.</title>
        <authorList>
            <person name="Jones T."/>
            <person name="Federspiel N.A."/>
            <person name="Chibana H."/>
            <person name="Dungan J."/>
            <person name="Kalman S."/>
            <person name="Magee B.B."/>
            <person name="Newport G."/>
            <person name="Thorstenson Y.R."/>
            <person name="Agabian N."/>
            <person name="Magee P.T."/>
            <person name="Davis R.W."/>
            <person name="Scherer S."/>
        </authorList>
    </citation>
    <scope>NUCLEOTIDE SEQUENCE [LARGE SCALE GENOMIC DNA]</scope>
    <source>
        <strain>SC5314 / ATCC MYA-2876</strain>
    </source>
</reference>
<reference key="2">
    <citation type="journal article" date="2007" name="Genome Biol.">
        <title>Assembly of the Candida albicans genome into sixteen supercontigs aligned on the eight chromosomes.</title>
        <authorList>
            <person name="van het Hoog M."/>
            <person name="Rast T.J."/>
            <person name="Martchenko M."/>
            <person name="Grindle S."/>
            <person name="Dignard D."/>
            <person name="Hogues H."/>
            <person name="Cuomo C."/>
            <person name="Berriman M."/>
            <person name="Scherer S."/>
            <person name="Magee B.B."/>
            <person name="Whiteway M."/>
            <person name="Chibana H."/>
            <person name="Nantel A."/>
            <person name="Magee P.T."/>
        </authorList>
    </citation>
    <scope>GENOME REANNOTATION</scope>
    <source>
        <strain>SC5314 / ATCC MYA-2876</strain>
    </source>
</reference>
<reference key="3">
    <citation type="journal article" date="2013" name="Genome Biol.">
        <title>Assembly of a phased diploid Candida albicans genome facilitates allele-specific measurements and provides a simple model for repeat and indel structure.</title>
        <authorList>
            <person name="Muzzey D."/>
            <person name="Schwartz K."/>
            <person name="Weissman J.S."/>
            <person name="Sherlock G."/>
        </authorList>
    </citation>
    <scope>NUCLEOTIDE SEQUENCE [LARGE SCALE GENOMIC DNA]</scope>
    <scope>GENOME REANNOTATION</scope>
    <source>
        <strain>SC5314 / ATCC MYA-2876</strain>
    </source>
</reference>
<reference key="4">
    <citation type="journal article" date="2004" name="Mol. Biol. Cell">
        <title>Transcription profiling of cyclic AMP signaling in Candida albicans.</title>
        <authorList>
            <person name="Harcus D."/>
            <person name="Nantel A."/>
            <person name="Marcil A."/>
            <person name="Rigby T."/>
            <person name="Whiteway M."/>
        </authorList>
    </citation>
    <scope>INDUCTION</scope>
</reference>
<reference key="5">
    <citation type="journal article" date="2006" name="Mycopathologia">
        <title>Non-glucan attached proteins of Candida albicans biofilm formed on various surfaces.</title>
        <authorList>
            <person name="Vediyappan G."/>
            <person name="Chaffin W.L."/>
        </authorList>
    </citation>
    <scope>INDUCTION</scope>
    <scope>IDENTIFICATION BY MASS SPECTROMETRY</scope>
</reference>
<reference key="6">
    <citation type="journal article" date="2008" name="Int. J. Med. Microbiol.">
        <title>A proteomic view of Candida albicans yeast cell metabolism in exponential and stationary growth phases.</title>
        <authorList>
            <person name="Kusch H."/>
            <person name="Engelmann S."/>
            <person name="Bode R."/>
            <person name="Albrecht D."/>
            <person name="Morschhauser J."/>
            <person name="Hecker M."/>
        </authorList>
    </citation>
    <scope>INDUCTION</scope>
</reference>
<reference key="7">
    <citation type="journal article" date="2012" name="PLoS ONE">
        <title>Small but crucial: the novel small heat shock protein Hsp21 mediates stress adaptation and virulence in Candida albicans.</title>
        <authorList>
            <person name="Mayer F.L."/>
            <person name="Wilson D."/>
            <person name="Jacobsen I.D."/>
            <person name="Miramon P."/>
            <person name="Slesiona S."/>
            <person name="Bohovych I.M."/>
            <person name="Brown A.J."/>
            <person name="Hube B."/>
        </authorList>
    </citation>
    <scope>FUNCTION</scope>
</reference>
<reference key="8">
    <citation type="journal article" date="2013" name="PLoS ONE">
        <title>Hsp21 potentiates antifungal drug tolerance in Candida albicans.</title>
        <authorList>
            <person name="Mayer F.L."/>
            <person name="Wilson D."/>
            <person name="Hube B."/>
        </authorList>
    </citation>
    <scope>FUNCTION</scope>
</reference>
<protein>
    <recommendedName>
        <fullName>Small heat shock protein 21</fullName>
    </recommendedName>
</protein>
<evidence type="ECO:0000255" key="1">
    <source>
        <dbReference type="PROSITE-ProRule" id="PRU00285"/>
    </source>
</evidence>
<evidence type="ECO:0000256" key="2">
    <source>
        <dbReference type="SAM" id="MobiDB-lite"/>
    </source>
</evidence>
<evidence type="ECO:0000269" key="3">
    <source>
    </source>
</evidence>
<evidence type="ECO:0000269" key="4">
    <source>
    </source>
</evidence>
<evidence type="ECO:0000269" key="5">
    <source>
    </source>
</evidence>
<evidence type="ECO:0000269" key="6">
    <source>
    </source>
</evidence>
<evidence type="ECO:0000269" key="7">
    <source>
    </source>
</evidence>
<proteinExistence type="evidence at protein level"/>
<keyword id="KW-1185">Reference proteome</keyword>
<keyword id="KW-0346">Stress response</keyword>
<keyword id="KW-0843">Virulence</keyword>
<organism>
    <name type="scientific">Candida albicans (strain SC5314 / ATCC MYA-2876)</name>
    <name type="common">Yeast</name>
    <dbReference type="NCBI Taxonomy" id="237561"/>
    <lineage>
        <taxon>Eukaryota</taxon>
        <taxon>Fungi</taxon>
        <taxon>Dikarya</taxon>
        <taxon>Ascomycota</taxon>
        <taxon>Saccharomycotina</taxon>
        <taxon>Pichiomycetes</taxon>
        <taxon>Debaryomycetaceae</taxon>
        <taxon>Candida/Lodderomyces clade</taxon>
        <taxon>Candida</taxon>
    </lineage>
</organism>
<comment type="function">
    <text evidence="6 7">Heat shock protein required for pathogenicity. Mediates thermotolerance and adaptation to oxidative stress and ethanol-induced stress. Required for invasive growth and filament formation under various filament inducing conditions. Plays a role in the capacity of damaging human-derived endothelial and oral epithelial cells during infection. Potentiates resistance to antifungal drugs, as well as resistance to killing by human neutrophils. Plays a major role in trehalose homeostasis in response to elevated temperatures. Regulates CEK1 activation by phosphorylation in response to elevated temperatures.</text>
</comment>
<comment type="induction">
    <text evidence="3 4 5">Only expressed in stationary phase. Expression is increased in the absence of adenylyl cyclase and in biofilms.</text>
</comment>
<comment type="similarity">
    <text evidence="1">Belongs to the small heat shock protein (HSP20) family.</text>
</comment>
<name>HSP21_CANAL</name>